<reference key="1">
    <citation type="journal article" date="2009" name="PLoS Genet.">
        <title>Organised genome dynamics in the Escherichia coli species results in highly diverse adaptive paths.</title>
        <authorList>
            <person name="Touchon M."/>
            <person name="Hoede C."/>
            <person name="Tenaillon O."/>
            <person name="Barbe V."/>
            <person name="Baeriswyl S."/>
            <person name="Bidet P."/>
            <person name="Bingen E."/>
            <person name="Bonacorsi S."/>
            <person name="Bouchier C."/>
            <person name="Bouvet O."/>
            <person name="Calteau A."/>
            <person name="Chiapello H."/>
            <person name="Clermont O."/>
            <person name="Cruveiller S."/>
            <person name="Danchin A."/>
            <person name="Diard M."/>
            <person name="Dossat C."/>
            <person name="Karoui M.E."/>
            <person name="Frapy E."/>
            <person name="Garry L."/>
            <person name="Ghigo J.M."/>
            <person name="Gilles A.M."/>
            <person name="Johnson J."/>
            <person name="Le Bouguenec C."/>
            <person name="Lescat M."/>
            <person name="Mangenot S."/>
            <person name="Martinez-Jehanne V."/>
            <person name="Matic I."/>
            <person name="Nassif X."/>
            <person name="Oztas S."/>
            <person name="Petit M.A."/>
            <person name="Pichon C."/>
            <person name="Rouy Z."/>
            <person name="Ruf C.S."/>
            <person name="Schneider D."/>
            <person name="Tourret J."/>
            <person name="Vacherie B."/>
            <person name="Vallenet D."/>
            <person name="Medigue C."/>
            <person name="Rocha E.P.C."/>
            <person name="Denamur E."/>
        </authorList>
    </citation>
    <scope>NUCLEOTIDE SEQUENCE [LARGE SCALE GENOMIC DNA]</scope>
    <source>
        <strain>IAI1</strain>
    </source>
</reference>
<protein>
    <recommendedName>
        <fullName evidence="1">Small ribosomal subunit protein uS10</fullName>
    </recommendedName>
    <alternativeName>
        <fullName evidence="2">30S ribosomal protein S10</fullName>
    </alternativeName>
</protein>
<accession>B7M1N5</accession>
<organism>
    <name type="scientific">Escherichia coli O8 (strain IAI1)</name>
    <dbReference type="NCBI Taxonomy" id="585034"/>
    <lineage>
        <taxon>Bacteria</taxon>
        <taxon>Pseudomonadati</taxon>
        <taxon>Pseudomonadota</taxon>
        <taxon>Gammaproteobacteria</taxon>
        <taxon>Enterobacterales</taxon>
        <taxon>Enterobacteriaceae</taxon>
        <taxon>Escherichia</taxon>
    </lineage>
</organism>
<name>RS10_ECO8A</name>
<comment type="function">
    <text evidence="1">Involved in the binding of tRNA to the ribosomes.</text>
</comment>
<comment type="subunit">
    <text evidence="1">Part of the 30S ribosomal subunit.</text>
</comment>
<comment type="similarity">
    <text evidence="1">Belongs to the universal ribosomal protein uS10 family.</text>
</comment>
<gene>
    <name evidence="1" type="primary">rpsJ</name>
    <name type="ordered locus">ECIAI1_3470</name>
</gene>
<keyword id="KW-0687">Ribonucleoprotein</keyword>
<keyword id="KW-0689">Ribosomal protein</keyword>
<sequence>MQNQRIRIRLKAFDHRLIDQATAEIVETAKRTGAQVRGPIPLPTRKERFTVLISPHVNKDARDQYEIRTHLRLVDIVEPTEKTVDALMRLDLAAGVDVQISLG</sequence>
<feature type="chain" id="PRO_1000127119" description="Small ribosomal subunit protein uS10">
    <location>
        <begin position="1"/>
        <end position="103"/>
    </location>
</feature>
<proteinExistence type="inferred from homology"/>
<dbReference type="EMBL" id="CU928160">
    <property type="protein sequence ID" value="CAR00272.1"/>
    <property type="molecule type" value="Genomic_DNA"/>
</dbReference>
<dbReference type="RefSeq" id="WP_001181004.1">
    <property type="nucleotide sequence ID" value="NC_011741.1"/>
</dbReference>
<dbReference type="SMR" id="B7M1N5"/>
<dbReference type="GeneID" id="93778666"/>
<dbReference type="KEGG" id="ecr:ECIAI1_3470"/>
<dbReference type="HOGENOM" id="CLU_122625_1_3_6"/>
<dbReference type="GO" id="GO:1990904">
    <property type="term" value="C:ribonucleoprotein complex"/>
    <property type="evidence" value="ECO:0007669"/>
    <property type="project" value="UniProtKB-KW"/>
</dbReference>
<dbReference type="GO" id="GO:0005840">
    <property type="term" value="C:ribosome"/>
    <property type="evidence" value="ECO:0007669"/>
    <property type="project" value="UniProtKB-KW"/>
</dbReference>
<dbReference type="GO" id="GO:0003735">
    <property type="term" value="F:structural constituent of ribosome"/>
    <property type="evidence" value="ECO:0007669"/>
    <property type="project" value="InterPro"/>
</dbReference>
<dbReference type="GO" id="GO:0000049">
    <property type="term" value="F:tRNA binding"/>
    <property type="evidence" value="ECO:0007669"/>
    <property type="project" value="UniProtKB-UniRule"/>
</dbReference>
<dbReference type="GO" id="GO:0006412">
    <property type="term" value="P:translation"/>
    <property type="evidence" value="ECO:0007669"/>
    <property type="project" value="UniProtKB-UniRule"/>
</dbReference>
<dbReference type="FunFam" id="3.30.70.600:FF:000001">
    <property type="entry name" value="30S ribosomal protein S10"/>
    <property type="match status" value="1"/>
</dbReference>
<dbReference type="Gene3D" id="3.30.70.600">
    <property type="entry name" value="Ribosomal protein S10 domain"/>
    <property type="match status" value="1"/>
</dbReference>
<dbReference type="HAMAP" id="MF_00508">
    <property type="entry name" value="Ribosomal_uS10"/>
    <property type="match status" value="1"/>
</dbReference>
<dbReference type="InterPro" id="IPR001848">
    <property type="entry name" value="Ribosomal_uS10"/>
</dbReference>
<dbReference type="InterPro" id="IPR018268">
    <property type="entry name" value="Ribosomal_uS10_CS"/>
</dbReference>
<dbReference type="InterPro" id="IPR027486">
    <property type="entry name" value="Ribosomal_uS10_dom"/>
</dbReference>
<dbReference type="InterPro" id="IPR036838">
    <property type="entry name" value="Ribosomal_uS10_dom_sf"/>
</dbReference>
<dbReference type="NCBIfam" id="NF001861">
    <property type="entry name" value="PRK00596.1"/>
    <property type="match status" value="1"/>
</dbReference>
<dbReference type="NCBIfam" id="TIGR01049">
    <property type="entry name" value="rpsJ_bact"/>
    <property type="match status" value="1"/>
</dbReference>
<dbReference type="PANTHER" id="PTHR11700">
    <property type="entry name" value="30S RIBOSOMAL PROTEIN S10 FAMILY MEMBER"/>
    <property type="match status" value="1"/>
</dbReference>
<dbReference type="Pfam" id="PF00338">
    <property type="entry name" value="Ribosomal_S10"/>
    <property type="match status" value="1"/>
</dbReference>
<dbReference type="PRINTS" id="PR00971">
    <property type="entry name" value="RIBOSOMALS10"/>
</dbReference>
<dbReference type="SMART" id="SM01403">
    <property type="entry name" value="Ribosomal_S10"/>
    <property type="match status" value="1"/>
</dbReference>
<dbReference type="SUPFAM" id="SSF54999">
    <property type="entry name" value="Ribosomal protein S10"/>
    <property type="match status" value="1"/>
</dbReference>
<dbReference type="PROSITE" id="PS00361">
    <property type="entry name" value="RIBOSOMAL_S10"/>
    <property type="match status" value="1"/>
</dbReference>
<evidence type="ECO:0000255" key="1">
    <source>
        <dbReference type="HAMAP-Rule" id="MF_00508"/>
    </source>
</evidence>
<evidence type="ECO:0000305" key="2"/>